<name>ASSY_SHOC1</name>
<gene>
    <name evidence="1" type="primary">argG</name>
    <name type="ordered locus">ABC2737</name>
</gene>
<feature type="chain" id="PRO_0000148571" description="Argininosuccinate synthase">
    <location>
        <begin position="1"/>
        <end position="403"/>
    </location>
</feature>
<feature type="binding site" evidence="1">
    <location>
        <begin position="9"/>
        <end position="17"/>
    </location>
    <ligand>
        <name>ATP</name>
        <dbReference type="ChEBI" id="CHEBI:30616"/>
    </ligand>
</feature>
<feature type="binding site" evidence="1">
    <location>
        <position position="86"/>
    </location>
    <ligand>
        <name>L-citrulline</name>
        <dbReference type="ChEBI" id="CHEBI:57743"/>
    </ligand>
</feature>
<feature type="binding site" evidence="1">
    <location>
        <position position="116"/>
    </location>
    <ligand>
        <name>ATP</name>
        <dbReference type="ChEBI" id="CHEBI:30616"/>
    </ligand>
</feature>
<feature type="binding site" evidence="1">
    <location>
        <position position="118"/>
    </location>
    <ligand>
        <name>L-aspartate</name>
        <dbReference type="ChEBI" id="CHEBI:29991"/>
    </ligand>
</feature>
<feature type="binding site" evidence="1">
    <location>
        <position position="122"/>
    </location>
    <ligand>
        <name>L-aspartate</name>
        <dbReference type="ChEBI" id="CHEBI:29991"/>
    </ligand>
</feature>
<feature type="binding site" evidence="1">
    <location>
        <position position="122"/>
    </location>
    <ligand>
        <name>L-citrulline</name>
        <dbReference type="ChEBI" id="CHEBI:57743"/>
    </ligand>
</feature>
<feature type="binding site" evidence="1">
    <location>
        <position position="123"/>
    </location>
    <ligand>
        <name>L-aspartate</name>
        <dbReference type="ChEBI" id="CHEBI:29991"/>
    </ligand>
</feature>
<feature type="binding site" evidence="1">
    <location>
        <position position="126"/>
    </location>
    <ligand>
        <name>L-citrulline</name>
        <dbReference type="ChEBI" id="CHEBI:57743"/>
    </ligand>
</feature>
<feature type="binding site" evidence="1">
    <location>
        <position position="174"/>
    </location>
    <ligand>
        <name>L-citrulline</name>
        <dbReference type="ChEBI" id="CHEBI:57743"/>
    </ligand>
</feature>
<feature type="binding site" evidence="1">
    <location>
        <position position="183"/>
    </location>
    <ligand>
        <name>L-citrulline</name>
        <dbReference type="ChEBI" id="CHEBI:57743"/>
    </ligand>
</feature>
<feature type="binding site" evidence="1">
    <location>
        <position position="259"/>
    </location>
    <ligand>
        <name>L-citrulline</name>
        <dbReference type="ChEBI" id="CHEBI:57743"/>
    </ligand>
</feature>
<feature type="binding site" evidence="1">
    <location>
        <position position="271"/>
    </location>
    <ligand>
        <name>L-citrulline</name>
        <dbReference type="ChEBI" id="CHEBI:57743"/>
    </ligand>
</feature>
<organism>
    <name type="scientific">Shouchella clausii (strain KSM-K16)</name>
    <name type="common">Alkalihalobacillus clausii</name>
    <dbReference type="NCBI Taxonomy" id="66692"/>
    <lineage>
        <taxon>Bacteria</taxon>
        <taxon>Bacillati</taxon>
        <taxon>Bacillota</taxon>
        <taxon>Bacilli</taxon>
        <taxon>Bacillales</taxon>
        <taxon>Bacillaceae</taxon>
        <taxon>Shouchella</taxon>
    </lineage>
</organism>
<accession>Q5WED8</accession>
<reference key="1">
    <citation type="submission" date="2003-10" db="EMBL/GenBank/DDBJ databases">
        <title>The complete genome sequence of the alkaliphilic Bacillus clausii KSM-K16.</title>
        <authorList>
            <person name="Takaki Y."/>
            <person name="Kageyama Y."/>
            <person name="Shimamura S."/>
            <person name="Suzuki H."/>
            <person name="Nishi S."/>
            <person name="Hatada Y."/>
            <person name="Kawai S."/>
            <person name="Ito S."/>
            <person name="Horikoshi K."/>
        </authorList>
    </citation>
    <scope>NUCLEOTIDE SEQUENCE [LARGE SCALE GENOMIC DNA]</scope>
    <source>
        <strain>KSM-K16</strain>
    </source>
</reference>
<comment type="catalytic activity">
    <reaction evidence="1">
        <text>L-citrulline + L-aspartate + ATP = 2-(N(omega)-L-arginino)succinate + AMP + diphosphate + H(+)</text>
        <dbReference type="Rhea" id="RHEA:10932"/>
        <dbReference type="ChEBI" id="CHEBI:15378"/>
        <dbReference type="ChEBI" id="CHEBI:29991"/>
        <dbReference type="ChEBI" id="CHEBI:30616"/>
        <dbReference type="ChEBI" id="CHEBI:33019"/>
        <dbReference type="ChEBI" id="CHEBI:57472"/>
        <dbReference type="ChEBI" id="CHEBI:57743"/>
        <dbReference type="ChEBI" id="CHEBI:456215"/>
        <dbReference type="EC" id="6.3.4.5"/>
    </reaction>
</comment>
<comment type="pathway">
    <text evidence="1">Amino-acid biosynthesis; L-arginine biosynthesis; L-arginine from L-ornithine and carbamoyl phosphate: step 2/3.</text>
</comment>
<comment type="subunit">
    <text evidence="1">Homotetramer.</text>
</comment>
<comment type="subcellular location">
    <subcellularLocation>
        <location evidence="1">Cytoplasm</location>
    </subcellularLocation>
</comment>
<comment type="similarity">
    <text evidence="1">Belongs to the argininosuccinate synthase family. Type 1 subfamily.</text>
</comment>
<protein>
    <recommendedName>
        <fullName evidence="1">Argininosuccinate synthase</fullName>
        <ecNumber evidence="1">6.3.4.5</ecNumber>
    </recommendedName>
    <alternativeName>
        <fullName evidence="1">Citrulline--aspartate ligase</fullName>
    </alternativeName>
</protein>
<evidence type="ECO:0000255" key="1">
    <source>
        <dbReference type="HAMAP-Rule" id="MF_00005"/>
    </source>
</evidence>
<proteinExistence type="inferred from homology"/>
<dbReference type="EC" id="6.3.4.5" evidence="1"/>
<dbReference type="EMBL" id="AP006627">
    <property type="protein sequence ID" value="BAD65272.1"/>
    <property type="molecule type" value="Genomic_DNA"/>
</dbReference>
<dbReference type="RefSeq" id="WP_011247580.1">
    <property type="nucleotide sequence ID" value="NC_006582.1"/>
</dbReference>
<dbReference type="SMR" id="Q5WED8"/>
<dbReference type="STRING" id="66692.ABC2737"/>
<dbReference type="KEGG" id="bcl:ABC2737"/>
<dbReference type="eggNOG" id="COG0137">
    <property type="taxonomic scope" value="Bacteria"/>
</dbReference>
<dbReference type="HOGENOM" id="CLU_032784_4_2_9"/>
<dbReference type="OrthoDB" id="9801641at2"/>
<dbReference type="UniPathway" id="UPA00068">
    <property type="reaction ID" value="UER00113"/>
</dbReference>
<dbReference type="Proteomes" id="UP000001168">
    <property type="component" value="Chromosome"/>
</dbReference>
<dbReference type="GO" id="GO:0005737">
    <property type="term" value="C:cytoplasm"/>
    <property type="evidence" value="ECO:0007669"/>
    <property type="project" value="UniProtKB-SubCell"/>
</dbReference>
<dbReference type="GO" id="GO:0004055">
    <property type="term" value="F:argininosuccinate synthase activity"/>
    <property type="evidence" value="ECO:0007669"/>
    <property type="project" value="UniProtKB-UniRule"/>
</dbReference>
<dbReference type="GO" id="GO:0005524">
    <property type="term" value="F:ATP binding"/>
    <property type="evidence" value="ECO:0007669"/>
    <property type="project" value="UniProtKB-UniRule"/>
</dbReference>
<dbReference type="GO" id="GO:0000053">
    <property type="term" value="P:argininosuccinate metabolic process"/>
    <property type="evidence" value="ECO:0007669"/>
    <property type="project" value="TreeGrafter"/>
</dbReference>
<dbReference type="GO" id="GO:0006526">
    <property type="term" value="P:L-arginine biosynthetic process"/>
    <property type="evidence" value="ECO:0007669"/>
    <property type="project" value="UniProtKB-UniRule"/>
</dbReference>
<dbReference type="GO" id="GO:0000050">
    <property type="term" value="P:urea cycle"/>
    <property type="evidence" value="ECO:0007669"/>
    <property type="project" value="TreeGrafter"/>
</dbReference>
<dbReference type="CDD" id="cd01999">
    <property type="entry name" value="ASS"/>
    <property type="match status" value="1"/>
</dbReference>
<dbReference type="FunFam" id="1.20.5.470:FF:000002">
    <property type="entry name" value="Argininosuccinate synthase"/>
    <property type="match status" value="1"/>
</dbReference>
<dbReference type="FunFam" id="3.40.50.620:FF:000038">
    <property type="entry name" value="Argininosuccinate synthase"/>
    <property type="match status" value="1"/>
</dbReference>
<dbReference type="FunFam" id="3.90.1260.10:FF:000007">
    <property type="entry name" value="Argininosuccinate synthase"/>
    <property type="match status" value="1"/>
</dbReference>
<dbReference type="Gene3D" id="3.90.1260.10">
    <property type="entry name" value="Argininosuccinate synthetase, chain A, domain 2"/>
    <property type="match status" value="1"/>
</dbReference>
<dbReference type="Gene3D" id="3.40.50.620">
    <property type="entry name" value="HUPs"/>
    <property type="match status" value="1"/>
</dbReference>
<dbReference type="Gene3D" id="1.20.5.470">
    <property type="entry name" value="Single helix bin"/>
    <property type="match status" value="1"/>
</dbReference>
<dbReference type="HAMAP" id="MF_00005">
    <property type="entry name" value="Arg_succ_synth_type1"/>
    <property type="match status" value="1"/>
</dbReference>
<dbReference type="InterPro" id="IPR048268">
    <property type="entry name" value="Arginosuc_syn_C"/>
</dbReference>
<dbReference type="InterPro" id="IPR048267">
    <property type="entry name" value="Arginosuc_syn_N"/>
</dbReference>
<dbReference type="InterPro" id="IPR001518">
    <property type="entry name" value="Arginosuc_synth"/>
</dbReference>
<dbReference type="InterPro" id="IPR018223">
    <property type="entry name" value="Arginosuc_synth_CS"/>
</dbReference>
<dbReference type="InterPro" id="IPR023434">
    <property type="entry name" value="Arginosuc_synth_type_1_subfam"/>
</dbReference>
<dbReference type="InterPro" id="IPR024074">
    <property type="entry name" value="AS_cat/multimer_dom_body"/>
</dbReference>
<dbReference type="InterPro" id="IPR014729">
    <property type="entry name" value="Rossmann-like_a/b/a_fold"/>
</dbReference>
<dbReference type="NCBIfam" id="TIGR00032">
    <property type="entry name" value="argG"/>
    <property type="match status" value="1"/>
</dbReference>
<dbReference type="NCBIfam" id="NF001770">
    <property type="entry name" value="PRK00509.1"/>
    <property type="match status" value="1"/>
</dbReference>
<dbReference type="PANTHER" id="PTHR11587">
    <property type="entry name" value="ARGININOSUCCINATE SYNTHASE"/>
    <property type="match status" value="1"/>
</dbReference>
<dbReference type="PANTHER" id="PTHR11587:SF2">
    <property type="entry name" value="ARGININOSUCCINATE SYNTHASE"/>
    <property type="match status" value="1"/>
</dbReference>
<dbReference type="Pfam" id="PF20979">
    <property type="entry name" value="Arginosuc_syn_C"/>
    <property type="match status" value="1"/>
</dbReference>
<dbReference type="Pfam" id="PF00764">
    <property type="entry name" value="Arginosuc_synth"/>
    <property type="match status" value="1"/>
</dbReference>
<dbReference type="SUPFAM" id="SSF52402">
    <property type="entry name" value="Adenine nucleotide alpha hydrolases-like"/>
    <property type="match status" value="1"/>
</dbReference>
<dbReference type="SUPFAM" id="SSF69864">
    <property type="entry name" value="Argininosuccinate synthetase, C-terminal domain"/>
    <property type="match status" value="1"/>
</dbReference>
<dbReference type="PROSITE" id="PS00564">
    <property type="entry name" value="ARGININOSUCCIN_SYN_1"/>
    <property type="match status" value="1"/>
</dbReference>
<dbReference type="PROSITE" id="PS00565">
    <property type="entry name" value="ARGININOSUCCIN_SYN_2"/>
    <property type="match status" value="1"/>
</dbReference>
<keyword id="KW-0028">Amino-acid biosynthesis</keyword>
<keyword id="KW-0055">Arginine biosynthesis</keyword>
<keyword id="KW-0067">ATP-binding</keyword>
<keyword id="KW-0963">Cytoplasm</keyword>
<keyword id="KW-0436">Ligase</keyword>
<keyword id="KW-0547">Nucleotide-binding</keyword>
<keyword id="KW-1185">Reference proteome</keyword>
<sequence length="403" mass="44510">MAKEKVVLAYSGGLDTSVAVKWLTDKGYDVIAVGLDVGEGKDLEFVKQKALQVGAIQSYTIDAKKEYAESFVLPALQAHALYEQKYPLVSALSRPLISKKLVEIAEQTGATAVAHGCTGKGNDQVRFEVSIQALNPNLKVLAPVREWAWSRDEEIEYAKAHNIPIPIDLDNPYSVDQNLWGRSNECGVLEDPWATPPEGAYALTAPLEKTPDTPDIIELSFEKGVPVAINGEAYPLDQLILTLNEIAGKHGVGRIDHVENRLVGIKSREVYECPGAMTLIKAHKELEDLTLPKELAHFKPVIEKKLTELIYEGLWFSSLQPALLAFLKESQTHVTGVVRVKLFKGHAIIEGRKSAYSLYNEKLATYTPDDEFDHSAAVGFISLWGLPTKVHSMVTKEKKEVTL</sequence>